<reference key="1">
    <citation type="journal article" date="2005" name="PLoS Biol.">
        <title>The genome sequence of Rickettsia felis identifies the first putative conjugative plasmid in an obligate intracellular parasite.</title>
        <authorList>
            <person name="Ogata H."/>
            <person name="Renesto P."/>
            <person name="Audic S."/>
            <person name="Robert C."/>
            <person name="Blanc G."/>
            <person name="Fournier P.-E."/>
            <person name="Parinello H."/>
            <person name="Claverie J.-M."/>
            <person name="Raoult D."/>
        </authorList>
    </citation>
    <scope>NUCLEOTIDE SEQUENCE [LARGE SCALE GENOMIC DNA]</scope>
    <source>
        <strain>ATCC VR-1525 / URRWXCal2</strain>
    </source>
</reference>
<feature type="chain" id="PRO_0000280769" description="Putative dioxygenase RF_0617">
    <location>
        <begin position="1"/>
        <end position="208"/>
    </location>
</feature>
<comment type="similarity">
    <text evidence="1">Belongs to the intradiol ring-cleavage dioxygenase family.</text>
</comment>
<sequence length="208" mass="24087">MKKFIFCFLCLWTLNIFAASKTYPNKLNRCKITRNIFNDYEPKVFETTNNLLRKTGRLSKFYGERILIKGKILDQNCVPVADAKVYLWQVGSGGKYPYEPLKTRVDKRRFTSKSDSSFTGSGIATTNNKGEYYFISMLPYKSSRYLRSANIRIEHPSLTTLETRLDLSDKNMCDNECGEVNPILIEPQENMPSYCFDLVLQGTTLKRY</sequence>
<proteinExistence type="inferred from homology"/>
<evidence type="ECO:0000305" key="1"/>
<name>Y617_RICFE</name>
<protein>
    <recommendedName>
        <fullName>Putative dioxygenase RF_0617</fullName>
        <ecNumber>1.13.11.-</ecNumber>
    </recommendedName>
</protein>
<organism>
    <name type="scientific">Rickettsia felis (strain ATCC VR-1525 / URRWXCal2)</name>
    <name type="common">Rickettsia azadi</name>
    <dbReference type="NCBI Taxonomy" id="315456"/>
    <lineage>
        <taxon>Bacteria</taxon>
        <taxon>Pseudomonadati</taxon>
        <taxon>Pseudomonadota</taxon>
        <taxon>Alphaproteobacteria</taxon>
        <taxon>Rickettsiales</taxon>
        <taxon>Rickettsiaceae</taxon>
        <taxon>Rickettsieae</taxon>
        <taxon>Rickettsia</taxon>
        <taxon>spotted fever group</taxon>
    </lineage>
</organism>
<accession>Q4ULV5</accession>
<dbReference type="EC" id="1.13.11.-"/>
<dbReference type="EMBL" id="CP000053">
    <property type="protein sequence ID" value="AAY61468.1"/>
    <property type="molecule type" value="Genomic_DNA"/>
</dbReference>
<dbReference type="SMR" id="Q4ULV5"/>
<dbReference type="STRING" id="315456.RF_0617"/>
<dbReference type="KEGG" id="rfe:RF_0617"/>
<dbReference type="eggNOG" id="COG3485">
    <property type="taxonomic scope" value="Bacteria"/>
</dbReference>
<dbReference type="HOGENOM" id="CLU_1320101_0_0_5"/>
<dbReference type="OrthoDB" id="9805815at2"/>
<dbReference type="Proteomes" id="UP000008548">
    <property type="component" value="Chromosome"/>
</dbReference>
<dbReference type="GO" id="GO:0008199">
    <property type="term" value="F:ferric iron binding"/>
    <property type="evidence" value="ECO:0007669"/>
    <property type="project" value="InterPro"/>
</dbReference>
<dbReference type="GO" id="GO:0016702">
    <property type="term" value="F:oxidoreductase activity, acting on single donors with incorporation of molecular oxygen, incorporation of two atoms of oxygen"/>
    <property type="evidence" value="ECO:0007669"/>
    <property type="project" value="InterPro"/>
</dbReference>
<dbReference type="Gene3D" id="2.60.130.10">
    <property type="entry name" value="Aromatic compound dioxygenase"/>
    <property type="match status" value="1"/>
</dbReference>
<dbReference type="InterPro" id="IPR000627">
    <property type="entry name" value="Intradiol_dOase_C"/>
</dbReference>
<dbReference type="InterPro" id="IPR015889">
    <property type="entry name" value="Intradiol_dOase_core"/>
</dbReference>
<dbReference type="InterPro" id="IPR050770">
    <property type="entry name" value="Intradiol_RC_Dioxygenase"/>
</dbReference>
<dbReference type="PANTHER" id="PTHR33711">
    <property type="entry name" value="DIOXYGENASE, PUTATIVE (AFU_ORTHOLOGUE AFUA_2G02910)-RELATED"/>
    <property type="match status" value="1"/>
</dbReference>
<dbReference type="PANTHER" id="PTHR33711:SF10">
    <property type="entry name" value="INTRADIOL RING-CLEAVAGE DIOXYGENASES DOMAIN-CONTAINING PROTEIN"/>
    <property type="match status" value="1"/>
</dbReference>
<dbReference type="Pfam" id="PF00775">
    <property type="entry name" value="Dioxygenase_C"/>
    <property type="match status" value="1"/>
</dbReference>
<dbReference type="SUPFAM" id="SSF49482">
    <property type="entry name" value="Aromatic compound dioxygenase"/>
    <property type="match status" value="1"/>
</dbReference>
<gene>
    <name type="ordered locus">RF_0617</name>
</gene>
<keyword id="KW-0223">Dioxygenase</keyword>
<keyword id="KW-0560">Oxidoreductase</keyword>